<name>PUR7_YEAST</name>
<keyword id="KW-0002">3D-structure</keyword>
<keyword id="KW-0007">Acetylation</keyword>
<keyword id="KW-0067">ATP-binding</keyword>
<keyword id="KW-0436">Ligase</keyword>
<keyword id="KW-0547">Nucleotide-binding</keyword>
<keyword id="KW-0658">Purine biosynthesis</keyword>
<keyword id="KW-1185">Reference proteome</keyword>
<proteinExistence type="evidence at protein level"/>
<dbReference type="EC" id="6.3.2.6" evidence="2"/>
<dbReference type="EMBL" id="M61209">
    <property type="protein sequence ID" value="AAA34396.1"/>
    <property type="molecule type" value="Genomic_DNA"/>
</dbReference>
<dbReference type="EMBL" id="M67445">
    <property type="protein sequence ID" value="AAA34398.1"/>
    <property type="molecule type" value="Genomic_DNA"/>
</dbReference>
<dbReference type="EMBL" id="L22015">
    <property type="protein sequence ID" value="AAC04963.1"/>
    <property type="molecule type" value="Genomic_DNA"/>
</dbReference>
<dbReference type="EMBL" id="X60549">
    <property type="protein sequence ID" value="CAA43043.1"/>
    <property type="molecule type" value="Genomic_DNA"/>
</dbReference>
<dbReference type="EMBL" id="BK006935">
    <property type="protein sequence ID" value="DAA06994.1"/>
    <property type="molecule type" value="Genomic_DNA"/>
</dbReference>
<dbReference type="PIR" id="S20122">
    <property type="entry name" value="JQ1395"/>
</dbReference>
<dbReference type="RefSeq" id="NP_009409.1">
    <property type="nucleotide sequence ID" value="NM_001178216.1"/>
</dbReference>
<dbReference type="PDB" id="1A48">
    <property type="method" value="X-ray"/>
    <property type="resolution" value="1.90 A"/>
    <property type="chains" value="A=2-306"/>
</dbReference>
<dbReference type="PDB" id="1OBD">
    <property type="method" value="X-ray"/>
    <property type="resolution" value="1.40 A"/>
    <property type="chains" value="A=2-306"/>
</dbReference>
<dbReference type="PDB" id="1OBG">
    <property type="method" value="X-ray"/>
    <property type="resolution" value="2.05 A"/>
    <property type="chains" value="A=2-306"/>
</dbReference>
<dbReference type="PDB" id="2CNQ">
    <property type="method" value="X-ray"/>
    <property type="resolution" value="1.00 A"/>
    <property type="chains" value="A=2-306"/>
</dbReference>
<dbReference type="PDB" id="2CNU">
    <property type="method" value="X-ray"/>
    <property type="resolution" value="1.05 A"/>
    <property type="chains" value="A=2-306"/>
</dbReference>
<dbReference type="PDB" id="2CNV">
    <property type="method" value="X-ray"/>
    <property type="resolution" value="2.00 A"/>
    <property type="chains" value="A=2-306"/>
</dbReference>
<dbReference type="PDBsum" id="1A48"/>
<dbReference type="PDBsum" id="1OBD"/>
<dbReference type="PDBsum" id="1OBG"/>
<dbReference type="PDBsum" id="2CNQ"/>
<dbReference type="PDBsum" id="2CNU"/>
<dbReference type="PDBsum" id="2CNV"/>
<dbReference type="SMR" id="P27616"/>
<dbReference type="BioGRID" id="31799">
    <property type="interactions" value="72"/>
</dbReference>
<dbReference type="FunCoup" id="P27616">
    <property type="interactions" value="980"/>
</dbReference>
<dbReference type="IntAct" id="P27616">
    <property type="interactions" value="2"/>
</dbReference>
<dbReference type="MINT" id="P27616"/>
<dbReference type="STRING" id="4932.YAR015W"/>
<dbReference type="iPTMnet" id="P27616"/>
<dbReference type="PaxDb" id="4932-YAR015W"/>
<dbReference type="PeptideAtlas" id="P27616"/>
<dbReference type="EnsemblFungi" id="YAR015W_mRNA">
    <property type="protein sequence ID" value="YAR015W"/>
    <property type="gene ID" value="YAR015W"/>
</dbReference>
<dbReference type="GeneID" id="851272"/>
<dbReference type="KEGG" id="sce:YAR015W"/>
<dbReference type="AGR" id="SGD:S000000070"/>
<dbReference type="SGD" id="S000000070">
    <property type="gene designation" value="ADE1"/>
</dbReference>
<dbReference type="VEuPathDB" id="FungiDB:YAR015W"/>
<dbReference type="eggNOG" id="KOG2835">
    <property type="taxonomic scope" value="Eukaryota"/>
</dbReference>
<dbReference type="GeneTree" id="ENSGT00390000010172"/>
<dbReference type="HOGENOM" id="CLU_045637_0_2_1"/>
<dbReference type="InParanoid" id="P27616"/>
<dbReference type="OMA" id="CEPFKVE"/>
<dbReference type="OrthoDB" id="9991235at2759"/>
<dbReference type="BioCyc" id="MetaCyc:YAR015W-MONOMER"/>
<dbReference type="BioCyc" id="YEAST:YAR015W-MONOMER"/>
<dbReference type="BRENDA" id="6.3.2.6">
    <property type="organism ID" value="984"/>
</dbReference>
<dbReference type="UniPathway" id="UPA00074">
    <property type="reaction ID" value="UER00131"/>
</dbReference>
<dbReference type="BioGRID-ORCS" id="851272">
    <property type="hits" value="5 hits in 10 CRISPR screens"/>
</dbReference>
<dbReference type="EvolutionaryTrace" id="P27616"/>
<dbReference type="PRO" id="PR:P27616"/>
<dbReference type="Proteomes" id="UP000002311">
    <property type="component" value="Chromosome I"/>
</dbReference>
<dbReference type="RNAct" id="P27616">
    <property type="molecule type" value="protein"/>
</dbReference>
<dbReference type="GO" id="GO:0005737">
    <property type="term" value="C:cytoplasm"/>
    <property type="evidence" value="ECO:0007005"/>
    <property type="project" value="SGD"/>
</dbReference>
<dbReference type="GO" id="GO:0005634">
    <property type="term" value="C:nucleus"/>
    <property type="evidence" value="ECO:0007005"/>
    <property type="project" value="SGD"/>
</dbReference>
<dbReference type="GO" id="GO:0005524">
    <property type="term" value="F:ATP binding"/>
    <property type="evidence" value="ECO:0007669"/>
    <property type="project" value="UniProtKB-KW"/>
</dbReference>
<dbReference type="GO" id="GO:0004639">
    <property type="term" value="F:phosphoribosylaminoimidazolesuccinocarboxamide synthase activity"/>
    <property type="evidence" value="ECO:0000314"/>
    <property type="project" value="SGD"/>
</dbReference>
<dbReference type="GO" id="GO:0006189">
    <property type="term" value="P:'de novo' IMP biosynthetic process"/>
    <property type="evidence" value="ECO:0000314"/>
    <property type="project" value="SGD"/>
</dbReference>
<dbReference type="GO" id="GO:0006164">
    <property type="term" value="P:purine nucleotide biosynthetic process"/>
    <property type="evidence" value="ECO:0000314"/>
    <property type="project" value="SGD"/>
</dbReference>
<dbReference type="CDD" id="cd01414">
    <property type="entry name" value="SAICAR_synt_Sc"/>
    <property type="match status" value="1"/>
</dbReference>
<dbReference type="FunFam" id="3.30.200.20:FF:000392">
    <property type="entry name" value="Phosphoribosylaminoimidazole-succinocarboxamide synthase"/>
    <property type="match status" value="1"/>
</dbReference>
<dbReference type="FunFam" id="3.30.470.20:FF:000015">
    <property type="entry name" value="Phosphoribosylaminoimidazole-succinocarboxamide synthase"/>
    <property type="match status" value="1"/>
</dbReference>
<dbReference type="Gene3D" id="3.30.470.20">
    <property type="entry name" value="ATP-grasp fold, B domain"/>
    <property type="match status" value="1"/>
</dbReference>
<dbReference type="Gene3D" id="3.30.200.20">
    <property type="entry name" value="Phosphorylase Kinase, domain 1"/>
    <property type="match status" value="1"/>
</dbReference>
<dbReference type="HAMAP" id="MF_00137">
    <property type="entry name" value="SAICAR_synth"/>
    <property type="match status" value="1"/>
</dbReference>
<dbReference type="InterPro" id="IPR028923">
    <property type="entry name" value="SAICAR_synt/ADE2_N"/>
</dbReference>
<dbReference type="InterPro" id="IPR001636">
    <property type="entry name" value="SAICAR_synth"/>
</dbReference>
<dbReference type="InterPro" id="IPR018236">
    <property type="entry name" value="SAICAR_synthetase_CS"/>
</dbReference>
<dbReference type="NCBIfam" id="NF010568">
    <property type="entry name" value="PRK13961.1"/>
    <property type="match status" value="1"/>
</dbReference>
<dbReference type="NCBIfam" id="TIGR00081">
    <property type="entry name" value="purC"/>
    <property type="match status" value="1"/>
</dbReference>
<dbReference type="PANTHER" id="PTHR43700">
    <property type="entry name" value="PHOSPHORIBOSYLAMINOIMIDAZOLE-SUCCINOCARBOXAMIDE SYNTHASE"/>
    <property type="match status" value="1"/>
</dbReference>
<dbReference type="PANTHER" id="PTHR43700:SF1">
    <property type="entry name" value="PHOSPHORIBOSYLAMINOIMIDAZOLE-SUCCINOCARBOXAMIDE SYNTHASE"/>
    <property type="match status" value="1"/>
</dbReference>
<dbReference type="Pfam" id="PF01259">
    <property type="entry name" value="SAICAR_synt"/>
    <property type="match status" value="1"/>
</dbReference>
<dbReference type="SUPFAM" id="SSF56104">
    <property type="entry name" value="SAICAR synthase-like"/>
    <property type="match status" value="1"/>
</dbReference>
<dbReference type="PROSITE" id="PS01057">
    <property type="entry name" value="SAICAR_SYNTHETASE_1"/>
    <property type="match status" value="1"/>
</dbReference>
<dbReference type="PROSITE" id="PS01058">
    <property type="entry name" value="SAICAR_SYNTHETASE_2"/>
    <property type="match status" value="1"/>
</dbReference>
<comment type="function">
    <text evidence="2">Catalyzes the reaction of 4-carboxy-5-aminoimidazole ribotide (CAIR) and aspartic acid with the formation of N-succinyl-5-amino-imidazole-4-carboxamide ribotide (SAICAR) in the purine biosynthesis pathway.</text>
</comment>
<comment type="catalytic activity">
    <reaction evidence="2">
        <text>5-amino-1-(5-phospho-D-ribosyl)imidazole-4-carboxylate + L-aspartate + ATP = (2S)-2-[5-amino-1-(5-phospho-beta-D-ribosyl)imidazole-4-carboxamido]succinate + ADP + phosphate + 2 H(+)</text>
        <dbReference type="Rhea" id="RHEA:22628"/>
        <dbReference type="ChEBI" id="CHEBI:15378"/>
        <dbReference type="ChEBI" id="CHEBI:29991"/>
        <dbReference type="ChEBI" id="CHEBI:30616"/>
        <dbReference type="ChEBI" id="CHEBI:43474"/>
        <dbReference type="ChEBI" id="CHEBI:58443"/>
        <dbReference type="ChEBI" id="CHEBI:77657"/>
        <dbReference type="ChEBI" id="CHEBI:456216"/>
        <dbReference type="EC" id="6.3.2.6"/>
    </reaction>
    <physiologicalReaction direction="left-to-right" evidence="5">
        <dbReference type="Rhea" id="RHEA:22629"/>
    </physiologicalReaction>
</comment>
<comment type="pathway">
    <text evidence="5">Purine metabolism; IMP biosynthesis via de novo pathway; 5-amino-1-(5-phospho-D-ribosyl)imidazole-4-carboxamide from 5-amino-1-(5-phospho-D-ribosyl)imidazole-4-carboxylate: step 1/2.</text>
</comment>
<comment type="subunit">
    <text>Monomer.</text>
</comment>
<comment type="interaction">
    <interactant intactId="EBI-14257">
        <id>P27616</id>
    </interactant>
    <interactant intactId="EBI-8659">
        <id>P02829</id>
        <label>HSP82</label>
    </interactant>
    <organismsDiffer>false</organismsDiffer>
    <experiments>2</experiments>
</comment>
<comment type="miscellaneous">
    <text evidence="1">Present with 4280 molecules/cell in log phase SD medium.</text>
</comment>
<comment type="similarity">
    <text evidence="4">Belongs to the SAICAR synthetase family.</text>
</comment>
<evidence type="ECO:0000269" key="1">
    <source>
    </source>
</evidence>
<evidence type="ECO:0000269" key="2">
    <source>
    </source>
</evidence>
<evidence type="ECO:0000269" key="3">
    <source>
    </source>
</evidence>
<evidence type="ECO:0000305" key="4"/>
<evidence type="ECO:0000305" key="5">
    <source>
    </source>
</evidence>
<evidence type="ECO:0007744" key="6">
    <source>
    </source>
</evidence>
<evidence type="ECO:0007829" key="7">
    <source>
        <dbReference type="PDB" id="2CNQ"/>
    </source>
</evidence>
<evidence type="ECO:0007829" key="8">
    <source>
        <dbReference type="PDB" id="2CNU"/>
    </source>
</evidence>
<gene>
    <name type="primary">ADE1</name>
    <name type="ordered locus">YAR015W</name>
</gene>
<feature type="initiator methionine" description="Removed" evidence="3 6">
    <location>
        <position position="1"/>
    </location>
</feature>
<feature type="chain" id="PRO_0000100929" description="Phosphoribosylaminoimidazole-succinocarboxamide synthase">
    <location>
        <begin position="2"/>
        <end position="306"/>
    </location>
</feature>
<feature type="modified residue" description="N-acetylserine" evidence="3 6">
    <location>
        <position position="2"/>
    </location>
</feature>
<feature type="sequence conflict" description="In Ref. 1; AAA34396 and 2; no nucleotide entry." evidence="4" ref="1 2">
    <original>E</original>
    <variation>G</variation>
    <location>
        <position position="185"/>
    </location>
</feature>
<feature type="strand" evidence="7">
    <location>
        <begin position="14"/>
        <end position="17"/>
    </location>
</feature>
<feature type="strand" evidence="7">
    <location>
        <begin position="19"/>
        <end position="27"/>
    </location>
</feature>
<feature type="strand" evidence="7">
    <location>
        <begin position="30"/>
        <end position="35"/>
    </location>
</feature>
<feature type="helix" evidence="7">
    <location>
        <begin position="53"/>
        <end position="67"/>
    </location>
</feature>
<feature type="turn" evidence="7">
    <location>
        <begin position="68"/>
        <end position="71"/>
    </location>
</feature>
<feature type="strand" evidence="7">
    <location>
        <begin position="72"/>
        <end position="76"/>
    </location>
</feature>
<feature type="helix" evidence="7">
    <location>
        <begin position="85"/>
        <end position="88"/>
    </location>
</feature>
<feature type="helix" evidence="7">
    <location>
        <begin position="91"/>
        <end position="94"/>
    </location>
</feature>
<feature type="helix" evidence="7">
    <location>
        <begin position="96"/>
        <end position="102"/>
    </location>
</feature>
<feature type="strand" evidence="7">
    <location>
        <begin position="105"/>
        <end position="110"/>
    </location>
</feature>
<feature type="strand" evidence="7">
    <location>
        <begin position="116"/>
        <end position="124"/>
    </location>
</feature>
<feature type="helix" evidence="7">
    <location>
        <begin position="127"/>
        <end position="136"/>
    </location>
</feature>
<feature type="strand" evidence="7">
    <location>
        <begin position="137"/>
        <end position="139"/>
    </location>
</feature>
<feature type="strand" evidence="7">
    <location>
        <begin position="153"/>
        <end position="159"/>
    </location>
</feature>
<feature type="helix" evidence="7">
    <location>
        <begin position="176"/>
        <end position="183"/>
    </location>
</feature>
<feature type="helix" evidence="7">
    <location>
        <begin position="185"/>
        <end position="209"/>
    </location>
</feature>
<feature type="strand" evidence="7">
    <location>
        <begin position="211"/>
        <end position="223"/>
    </location>
</feature>
<feature type="turn" evidence="7">
    <location>
        <begin position="224"/>
        <end position="227"/>
    </location>
</feature>
<feature type="strand" evidence="7">
    <location>
        <begin position="228"/>
        <end position="233"/>
    </location>
</feature>
<feature type="turn" evidence="7">
    <location>
        <begin position="238"/>
        <end position="240"/>
    </location>
</feature>
<feature type="strand" evidence="7">
    <location>
        <begin position="241"/>
        <end position="245"/>
    </location>
</feature>
<feature type="turn" evidence="7">
    <location>
        <begin position="246"/>
        <end position="248"/>
    </location>
</feature>
<feature type="turn" evidence="8">
    <location>
        <begin position="258"/>
        <end position="260"/>
    </location>
</feature>
<feature type="helix" evidence="7">
    <location>
        <begin position="261"/>
        <end position="269"/>
    </location>
</feature>
<feature type="helix" evidence="7">
    <location>
        <begin position="282"/>
        <end position="300"/>
    </location>
</feature>
<organism>
    <name type="scientific">Saccharomyces cerevisiae (strain ATCC 204508 / S288c)</name>
    <name type="common">Baker's yeast</name>
    <dbReference type="NCBI Taxonomy" id="559292"/>
    <lineage>
        <taxon>Eukaryota</taxon>
        <taxon>Fungi</taxon>
        <taxon>Dikarya</taxon>
        <taxon>Ascomycota</taxon>
        <taxon>Saccharomycotina</taxon>
        <taxon>Saccharomycetes</taxon>
        <taxon>Saccharomycetales</taxon>
        <taxon>Saccharomycetaceae</taxon>
        <taxon>Saccharomyces</taxon>
    </lineage>
</organism>
<sequence>MSITKTELDGILPLVARGKVRDIYEVDAGTLLFVATDRISAYDVIMENSIPEKGILLTKLSEFWFKFLSNDVRNHLVDIAPGKTIFDYLPAKLSEPKYKTQLEDRSLLVHKHKLIPLEVIVRGYITGSAWKEYVKTGTVHGLKQPQGLKESQEFPEPIFTPSTKAEQGEHDENISPAQAAELVGEDLSRRVAELAVKLYSKCKDYAKEKGIIIADTKFEFGIDEKTNEIILVDEVLTPDSSRFWNGASYKVGESQDSYDKQFLRDWLTANKLNGVNGVKMPQDIVDRTRAKYIEAYETLTGSKWSH</sequence>
<accession>P27616</accession>
<accession>D6VPM4</accession>
<protein>
    <recommendedName>
        <fullName>Phosphoribosylaminoimidazole-succinocarboxamide synthase</fullName>
        <ecNumber evidence="2">6.3.2.6</ecNumber>
    </recommendedName>
    <alternativeName>
        <fullName>SAICAR synthetase</fullName>
    </alternativeName>
</protein>
<reference key="1">
    <citation type="journal article" date="1986" name="Bioorg. Khim.">
        <title>Nucleotide sequence of the ADE1 gene of the yeast Saccharomyces cerevisiae.</title>
        <authorList>
            <person name="Myasnikov A.N."/>
            <person name="Plavnik Y.A."/>
            <person name="Sasnauskas K.V."/>
            <person name="Gedminene G.K."/>
            <person name="Yanulaitis A.A."/>
            <person name="Smirnov M.N."/>
        </authorList>
    </citation>
    <scope>NUCLEOTIDE SEQUENCE [GENOMIC DNA]</scope>
</reference>
<reference key="2">
    <citation type="journal article" date="1991" name="Gene">
        <title>The Saccharomyces cerevisiae ADE1 gene: structure, overexpression and possible regulation by general amino acid control.</title>
        <authorList>
            <person name="Myasnikov A.N."/>
            <person name="Sasnauskas K.V."/>
            <person name="Janulaitis A.A."/>
            <person name="Smirnov M.N."/>
        </authorList>
    </citation>
    <scope>NUCLEOTIDE SEQUENCE [GENOMIC DNA]</scope>
    <scope>FUNCTION</scope>
    <scope>CATALYTIC ACTIVITY</scope>
</reference>
<reference key="3">
    <citation type="journal article" date="1991" name="Nucleic Acids Res.">
        <title>A directed DNA sequencing strategy based upon Tn3 transposon mutagenesis: application to the ADE1 locus on Saccharomyces cerevisiae chromosome I.</title>
        <authorList>
            <person name="Davies C.J."/>
            <person name="Hutchison C.A. III"/>
        </authorList>
    </citation>
    <scope>NUCLEOTIDE SEQUENCE [GENOMIC DNA]</scope>
</reference>
<reference key="4">
    <citation type="journal article" date="1994" name="Yeast">
        <title>Sequencing of chromosome I of Saccharomyces cerevisiae: analysis of the 42 kbp SPO7-CENI-CDC15 region.</title>
        <authorList>
            <person name="Clark M.W."/>
            <person name="Keng T."/>
            <person name="Storms R.K."/>
            <person name="Zhong W.-W."/>
            <person name="Fortin N."/>
            <person name="Zeng B."/>
            <person name="Delaney S."/>
            <person name="Ouellette B.F.F."/>
            <person name="Barton A.B."/>
            <person name="Kaback D.B."/>
            <person name="Bussey H."/>
        </authorList>
    </citation>
    <scope>NUCLEOTIDE SEQUENCE [GENOMIC DNA]</scope>
    <source>
        <strain>ATCC 204511 / S288c / AB972</strain>
    </source>
</reference>
<reference key="5">
    <citation type="journal article" date="1995" name="Proc. Natl. Acad. Sci. U.S.A.">
        <title>The nucleotide sequence of chromosome I from Saccharomyces cerevisiae.</title>
        <authorList>
            <person name="Bussey H."/>
            <person name="Kaback D.B."/>
            <person name="Zhong W.-W."/>
            <person name="Vo D.H."/>
            <person name="Clark M.W."/>
            <person name="Fortin N."/>
            <person name="Hall J."/>
            <person name="Ouellette B.F.F."/>
            <person name="Keng T."/>
            <person name="Barton A.B."/>
            <person name="Su Y."/>
            <person name="Davies C.J."/>
            <person name="Storms R.K."/>
        </authorList>
    </citation>
    <scope>NUCLEOTIDE SEQUENCE [LARGE SCALE GENOMIC DNA]</scope>
    <source>
        <strain>ATCC 204508 / S288c</strain>
    </source>
</reference>
<reference key="6">
    <citation type="journal article" date="2014" name="G3 (Bethesda)">
        <title>The reference genome sequence of Saccharomyces cerevisiae: Then and now.</title>
        <authorList>
            <person name="Engel S.R."/>
            <person name="Dietrich F.S."/>
            <person name="Fisk D.G."/>
            <person name="Binkley G."/>
            <person name="Balakrishnan R."/>
            <person name="Costanzo M.C."/>
            <person name="Dwight S.S."/>
            <person name="Hitz B.C."/>
            <person name="Karra K."/>
            <person name="Nash R.S."/>
            <person name="Weng S."/>
            <person name="Wong E.D."/>
            <person name="Lloyd P."/>
            <person name="Skrzypek M.S."/>
            <person name="Miyasato S.R."/>
            <person name="Simison M."/>
            <person name="Cherry J.M."/>
        </authorList>
    </citation>
    <scope>GENOME REANNOTATION</scope>
    <source>
        <strain>ATCC 204508 / S288c</strain>
    </source>
</reference>
<reference key="7">
    <citation type="journal article" date="1992" name="Mol. Gen. Genet.">
        <title>NPK1, a nonessential protein kinase gene in Saccharomyces cerevisiae with similarity to Aspergillus nidulans nimA.</title>
        <authorList>
            <person name="Schweitzer B."/>
            <person name="Philippsen P."/>
        </authorList>
    </citation>
    <scope>NUCLEOTIDE SEQUENCE [GENOMIC DNA] OF 285-306</scope>
</reference>
<reference key="8">
    <citation type="journal article" date="2003" name="Nature">
        <title>Global analysis of protein expression in yeast.</title>
        <authorList>
            <person name="Ghaemmaghami S."/>
            <person name="Huh W.-K."/>
            <person name="Bower K."/>
            <person name="Howson R.W."/>
            <person name="Belle A."/>
            <person name="Dephoure N."/>
            <person name="O'Shea E.K."/>
            <person name="Weissman J.S."/>
        </authorList>
    </citation>
    <scope>LEVEL OF PROTEIN EXPRESSION [LARGE SCALE ANALYSIS]</scope>
</reference>
<reference key="9">
    <citation type="journal article" date="2012" name="Proc. Natl. Acad. Sci. U.S.A.">
        <title>N-terminal acetylome analyses and functional insights of the N-terminal acetyltransferase NatB.</title>
        <authorList>
            <person name="Van Damme P."/>
            <person name="Lasa M."/>
            <person name="Polevoda B."/>
            <person name="Gazquez C."/>
            <person name="Elosegui-Artola A."/>
            <person name="Kim D.S."/>
            <person name="De Juan-Pardo E."/>
            <person name="Demeyer K."/>
            <person name="Hole K."/>
            <person name="Larrea E."/>
            <person name="Timmerman E."/>
            <person name="Prieto J."/>
            <person name="Arnesen T."/>
            <person name="Sherman F."/>
            <person name="Gevaert K."/>
            <person name="Aldabe R."/>
        </authorList>
    </citation>
    <scope>ACETYLATION [LARGE SCALE ANALYSIS] AT SER-2</scope>
    <scope>CLEAVAGE OF INITIATOR METHIONINE [LARGE SCALE ANALYSIS]</scope>
    <scope>IDENTIFICATION BY MASS SPECTROMETRY [LARGE SCALE ANALYSIS]</scope>
</reference>
<reference key="10">
    <citation type="journal article" date="1998" name="Structure">
        <title>The structure of SAICAR synthase: an enzyme in the de novo pathway of purine nucleotide biosynthesis.</title>
        <authorList>
            <person name="Levdikov V.M."/>
            <person name="Barynin V.V."/>
            <person name="Grebenko A.I."/>
            <person name="Melik-Adamyan W.R."/>
            <person name="Lamzin V.S."/>
            <person name="Wilson K.S."/>
        </authorList>
    </citation>
    <scope>X-RAY CRYSTALLOGRAPHY (1.9 ANGSTROMS)</scope>
    <scope>ACETYLATION AT SER-2</scope>
</reference>